<gene>
    <name evidence="1" type="primary">sthA</name>
    <name evidence="1" type="synonym">udhA</name>
    <name type="ordered locus">Spro_4774</name>
</gene>
<reference key="1">
    <citation type="submission" date="2007-09" db="EMBL/GenBank/DDBJ databases">
        <title>Complete sequence of chromosome of Serratia proteamaculans 568.</title>
        <authorList>
            <consortium name="US DOE Joint Genome Institute"/>
            <person name="Copeland A."/>
            <person name="Lucas S."/>
            <person name="Lapidus A."/>
            <person name="Barry K."/>
            <person name="Glavina del Rio T."/>
            <person name="Dalin E."/>
            <person name="Tice H."/>
            <person name="Pitluck S."/>
            <person name="Chain P."/>
            <person name="Malfatti S."/>
            <person name="Shin M."/>
            <person name="Vergez L."/>
            <person name="Schmutz J."/>
            <person name="Larimer F."/>
            <person name="Land M."/>
            <person name="Hauser L."/>
            <person name="Kyrpides N."/>
            <person name="Kim E."/>
            <person name="Taghavi S."/>
            <person name="Newman L."/>
            <person name="Vangronsveld J."/>
            <person name="van der Lelie D."/>
            <person name="Richardson P."/>
        </authorList>
    </citation>
    <scope>NUCLEOTIDE SEQUENCE [LARGE SCALE GENOMIC DNA]</scope>
    <source>
        <strain>568</strain>
    </source>
</reference>
<name>STHA_SERP5</name>
<comment type="function">
    <text evidence="1">Conversion of NADPH, generated by peripheral catabolic pathways, to NADH, which can enter the respiratory chain for energy generation.</text>
</comment>
<comment type="catalytic activity">
    <reaction evidence="1">
        <text>NAD(+) + NADPH = NADH + NADP(+)</text>
        <dbReference type="Rhea" id="RHEA:11692"/>
        <dbReference type="ChEBI" id="CHEBI:57540"/>
        <dbReference type="ChEBI" id="CHEBI:57783"/>
        <dbReference type="ChEBI" id="CHEBI:57945"/>
        <dbReference type="ChEBI" id="CHEBI:58349"/>
        <dbReference type="EC" id="1.6.1.1"/>
    </reaction>
</comment>
<comment type="cofactor">
    <cofactor evidence="1">
        <name>FAD</name>
        <dbReference type="ChEBI" id="CHEBI:57692"/>
    </cofactor>
    <text evidence="1">Binds 1 FAD per subunit.</text>
</comment>
<comment type="subcellular location">
    <subcellularLocation>
        <location evidence="1">Cytoplasm</location>
    </subcellularLocation>
</comment>
<comment type="similarity">
    <text evidence="1">Belongs to the class-I pyridine nucleotide-disulfide oxidoreductase family.</text>
</comment>
<organism>
    <name type="scientific">Serratia proteamaculans (strain 568)</name>
    <dbReference type="NCBI Taxonomy" id="399741"/>
    <lineage>
        <taxon>Bacteria</taxon>
        <taxon>Pseudomonadati</taxon>
        <taxon>Pseudomonadota</taxon>
        <taxon>Gammaproteobacteria</taxon>
        <taxon>Enterobacterales</taxon>
        <taxon>Yersiniaceae</taxon>
        <taxon>Serratia</taxon>
    </lineage>
</organism>
<feature type="chain" id="PRO_1000059011" description="Soluble pyridine nucleotide transhydrogenase">
    <location>
        <begin position="1"/>
        <end position="465"/>
    </location>
</feature>
<feature type="binding site" evidence="1">
    <location>
        <begin position="36"/>
        <end position="45"/>
    </location>
    <ligand>
        <name>FAD</name>
        <dbReference type="ChEBI" id="CHEBI:57692"/>
    </ligand>
</feature>
<evidence type="ECO:0000255" key="1">
    <source>
        <dbReference type="HAMAP-Rule" id="MF_00247"/>
    </source>
</evidence>
<dbReference type="EC" id="1.6.1.1" evidence="1"/>
<dbReference type="EMBL" id="CP000826">
    <property type="protein sequence ID" value="ABV43867.1"/>
    <property type="molecule type" value="Genomic_DNA"/>
</dbReference>
<dbReference type="SMR" id="A8GL77"/>
<dbReference type="STRING" id="399741.Spro_4774"/>
<dbReference type="KEGG" id="spe:Spro_4774"/>
<dbReference type="eggNOG" id="COG1249">
    <property type="taxonomic scope" value="Bacteria"/>
</dbReference>
<dbReference type="HOGENOM" id="CLU_016755_0_0_6"/>
<dbReference type="OrthoDB" id="9800167at2"/>
<dbReference type="GO" id="GO:0005829">
    <property type="term" value="C:cytosol"/>
    <property type="evidence" value="ECO:0007669"/>
    <property type="project" value="TreeGrafter"/>
</dbReference>
<dbReference type="GO" id="GO:0004148">
    <property type="term" value="F:dihydrolipoyl dehydrogenase (NADH) activity"/>
    <property type="evidence" value="ECO:0007669"/>
    <property type="project" value="TreeGrafter"/>
</dbReference>
<dbReference type="GO" id="GO:0050660">
    <property type="term" value="F:flavin adenine dinucleotide binding"/>
    <property type="evidence" value="ECO:0007669"/>
    <property type="project" value="TreeGrafter"/>
</dbReference>
<dbReference type="GO" id="GO:0003957">
    <property type="term" value="F:NAD(P)+ transhydrogenase (Si-specific) activity"/>
    <property type="evidence" value="ECO:0007669"/>
    <property type="project" value="UniProtKB-UniRule"/>
</dbReference>
<dbReference type="GO" id="GO:0006103">
    <property type="term" value="P:2-oxoglutarate metabolic process"/>
    <property type="evidence" value="ECO:0007669"/>
    <property type="project" value="TreeGrafter"/>
</dbReference>
<dbReference type="GO" id="GO:0006739">
    <property type="term" value="P:NADP metabolic process"/>
    <property type="evidence" value="ECO:0007669"/>
    <property type="project" value="UniProtKB-UniRule"/>
</dbReference>
<dbReference type="FunFam" id="3.30.390.30:FF:000002">
    <property type="entry name" value="Soluble pyridine nucleotide transhydrogenase"/>
    <property type="match status" value="1"/>
</dbReference>
<dbReference type="FunFam" id="3.50.50.60:FF:000008">
    <property type="entry name" value="Soluble pyridine nucleotide transhydrogenase"/>
    <property type="match status" value="1"/>
</dbReference>
<dbReference type="Gene3D" id="3.30.390.30">
    <property type="match status" value="1"/>
</dbReference>
<dbReference type="Gene3D" id="3.50.50.60">
    <property type="entry name" value="FAD/NAD(P)-binding domain"/>
    <property type="match status" value="2"/>
</dbReference>
<dbReference type="HAMAP" id="MF_00247">
    <property type="entry name" value="SthA"/>
    <property type="match status" value="1"/>
</dbReference>
<dbReference type="InterPro" id="IPR050151">
    <property type="entry name" value="Class-I_Pyr_Nuc-Dis_Oxidored"/>
</dbReference>
<dbReference type="InterPro" id="IPR036188">
    <property type="entry name" value="FAD/NAD-bd_sf"/>
</dbReference>
<dbReference type="InterPro" id="IPR023753">
    <property type="entry name" value="FAD/NAD-binding_dom"/>
</dbReference>
<dbReference type="InterPro" id="IPR016156">
    <property type="entry name" value="FAD/NAD-linked_Rdtase_dimer_sf"/>
</dbReference>
<dbReference type="InterPro" id="IPR001100">
    <property type="entry name" value="Pyr_nuc-diS_OxRdtase"/>
</dbReference>
<dbReference type="InterPro" id="IPR004099">
    <property type="entry name" value="Pyr_nucl-diS_OxRdtase_dimer"/>
</dbReference>
<dbReference type="InterPro" id="IPR022962">
    <property type="entry name" value="STH_gammaproteobact"/>
</dbReference>
<dbReference type="NCBIfam" id="NF003585">
    <property type="entry name" value="PRK05249.1"/>
    <property type="match status" value="1"/>
</dbReference>
<dbReference type="PANTHER" id="PTHR22912">
    <property type="entry name" value="DISULFIDE OXIDOREDUCTASE"/>
    <property type="match status" value="1"/>
</dbReference>
<dbReference type="PANTHER" id="PTHR22912:SF93">
    <property type="entry name" value="SOLUBLE PYRIDINE NUCLEOTIDE TRANSHYDROGENASE"/>
    <property type="match status" value="1"/>
</dbReference>
<dbReference type="Pfam" id="PF07992">
    <property type="entry name" value="Pyr_redox_2"/>
    <property type="match status" value="1"/>
</dbReference>
<dbReference type="Pfam" id="PF02852">
    <property type="entry name" value="Pyr_redox_dim"/>
    <property type="match status" value="1"/>
</dbReference>
<dbReference type="PIRSF" id="PIRSF000350">
    <property type="entry name" value="Mercury_reductase_MerA"/>
    <property type="match status" value="1"/>
</dbReference>
<dbReference type="PRINTS" id="PR00368">
    <property type="entry name" value="FADPNR"/>
</dbReference>
<dbReference type="PRINTS" id="PR00411">
    <property type="entry name" value="PNDRDTASEI"/>
</dbReference>
<dbReference type="SUPFAM" id="SSF51905">
    <property type="entry name" value="FAD/NAD(P)-binding domain"/>
    <property type="match status" value="1"/>
</dbReference>
<dbReference type="SUPFAM" id="SSF55424">
    <property type="entry name" value="FAD/NAD-linked reductases, dimerisation (C-terminal) domain"/>
    <property type="match status" value="1"/>
</dbReference>
<sequence length="465" mass="51218">MQQHYQFDAIVIGSGPGGEGAAMGLVKQGARVAVIERYNNVGGGCTHWGTIPSKALRHAVSRIIEFNQNPLYNNSRTLSATFPDILRHADNVINQQTRMRQGFYERNQCKLFAGDARFIDANTVSVSYMDGTQDTIRADHIVIACGSRPYNPSSVDFNHPRIYNSDSILELNHEPRHVIIYGAGVIGCEYASIFRGLNVKVDLINTRDRLLAFLDQEMSDSLSYHFWNNGVVIRHNEEFEKIEGTDDGVIVHLKSGKKVKADCLLYANGRTGNTDSLGLENVGLESDSRGLLKVNSMYQTALSHIYAVGDVIGYPSLASAAYDQGRIAAQAIASGEASGHLIEDIPTGIYTIPEISSVGKTEQELTAMKVPYEVGRAQFKHLARAQIAGMNVGSLKILFHRDTLQILGIHCFGERAAEIIHIGQAIMEQKGEGNTIEYFVNTTFNYPTMAEAYRVAALNGLNRLF</sequence>
<protein>
    <recommendedName>
        <fullName evidence="1">Soluble pyridine nucleotide transhydrogenase</fullName>
        <shortName evidence="1">STH</shortName>
        <ecNumber evidence="1">1.6.1.1</ecNumber>
    </recommendedName>
    <alternativeName>
        <fullName evidence="1">NAD(P)(+) transhydrogenase [B-specific]</fullName>
    </alternativeName>
</protein>
<keyword id="KW-0963">Cytoplasm</keyword>
<keyword id="KW-0274">FAD</keyword>
<keyword id="KW-0285">Flavoprotein</keyword>
<keyword id="KW-0520">NAD</keyword>
<keyword id="KW-0521">NADP</keyword>
<keyword id="KW-0560">Oxidoreductase</keyword>
<accession>A8GL77</accession>
<proteinExistence type="inferred from homology"/>